<evidence type="ECO:0000255" key="1">
    <source>
        <dbReference type="HAMAP-Rule" id="MF_00031"/>
    </source>
</evidence>
<comment type="function">
    <text evidence="1">The RuvA-RuvB-RuvC complex processes Holliday junction (HJ) DNA during genetic recombination and DNA repair, while the RuvA-RuvB complex plays an important role in the rescue of blocked DNA replication forks via replication fork reversal (RFR). RuvA specifically binds to HJ cruciform DNA, conferring on it an open structure. The RuvB hexamer acts as an ATP-dependent pump, pulling dsDNA into and through the RuvAB complex. HJ branch migration allows RuvC to scan DNA until it finds its consensus sequence, where it cleaves and resolves the cruciform DNA.</text>
</comment>
<comment type="subunit">
    <text evidence="1">Homotetramer. Forms an RuvA(8)-RuvB(12)-Holliday junction (HJ) complex. HJ DNA is sandwiched between 2 RuvA tetramers; dsDNA enters through RuvA and exits via RuvB. An RuvB hexamer assembles on each DNA strand where it exits the tetramer. Each RuvB hexamer is contacted by two RuvA subunits (via domain III) on 2 adjacent RuvB subunits; this complex drives branch migration. In the full resolvosome a probable DNA-RuvA(4)-RuvB(12)-RuvC(2) complex forms which resolves the HJ.</text>
</comment>
<comment type="subcellular location">
    <subcellularLocation>
        <location evidence="1">Cytoplasm</location>
    </subcellularLocation>
</comment>
<comment type="domain">
    <text evidence="1">Has three domains with a flexible linker between the domains II and III and assumes an 'L' shape. Domain III is highly mobile and contacts RuvB.</text>
</comment>
<comment type="similarity">
    <text evidence="1">Belongs to the RuvA family.</text>
</comment>
<gene>
    <name evidence="1" type="primary">ruvA</name>
    <name type="ordered locus">SAB1511c</name>
</gene>
<keyword id="KW-0963">Cytoplasm</keyword>
<keyword id="KW-0227">DNA damage</keyword>
<keyword id="KW-0233">DNA recombination</keyword>
<keyword id="KW-0234">DNA repair</keyword>
<keyword id="KW-0238">DNA-binding</keyword>
<proteinExistence type="inferred from homology"/>
<accession>Q2YT88</accession>
<feature type="chain" id="PRO_1000002565" description="Holliday junction branch migration complex subunit RuvA">
    <location>
        <begin position="1"/>
        <end position="200"/>
    </location>
</feature>
<feature type="region of interest" description="Domain I" evidence="1">
    <location>
        <begin position="1"/>
        <end position="63"/>
    </location>
</feature>
<feature type="region of interest" description="Domain II" evidence="1">
    <location>
        <begin position="64"/>
        <end position="142"/>
    </location>
</feature>
<feature type="region of interest" description="Flexible linker" evidence="1">
    <location>
        <begin position="143"/>
        <end position="149"/>
    </location>
</feature>
<feature type="region of interest" description="Domain III" evidence="1">
    <location>
        <begin position="150"/>
        <end position="200"/>
    </location>
</feature>
<organism>
    <name type="scientific">Staphylococcus aureus (strain bovine RF122 / ET3-1)</name>
    <dbReference type="NCBI Taxonomy" id="273036"/>
    <lineage>
        <taxon>Bacteria</taxon>
        <taxon>Bacillati</taxon>
        <taxon>Bacillota</taxon>
        <taxon>Bacilli</taxon>
        <taxon>Bacillales</taxon>
        <taxon>Staphylococcaceae</taxon>
        <taxon>Staphylococcus</taxon>
    </lineage>
</organism>
<name>RUVA_STAAB</name>
<dbReference type="EMBL" id="AJ938182">
    <property type="protein sequence ID" value="CAI81200.1"/>
    <property type="molecule type" value="Genomic_DNA"/>
</dbReference>
<dbReference type="RefSeq" id="WP_000271547.1">
    <property type="nucleotide sequence ID" value="NC_007622.1"/>
</dbReference>
<dbReference type="SMR" id="Q2YT88"/>
<dbReference type="KEGG" id="sab:SAB1511c"/>
<dbReference type="HOGENOM" id="CLU_087936_1_0_9"/>
<dbReference type="GO" id="GO:0005737">
    <property type="term" value="C:cytoplasm"/>
    <property type="evidence" value="ECO:0007669"/>
    <property type="project" value="UniProtKB-SubCell"/>
</dbReference>
<dbReference type="GO" id="GO:0009379">
    <property type="term" value="C:Holliday junction helicase complex"/>
    <property type="evidence" value="ECO:0007669"/>
    <property type="project" value="InterPro"/>
</dbReference>
<dbReference type="GO" id="GO:0048476">
    <property type="term" value="C:Holliday junction resolvase complex"/>
    <property type="evidence" value="ECO:0007669"/>
    <property type="project" value="UniProtKB-UniRule"/>
</dbReference>
<dbReference type="GO" id="GO:0005524">
    <property type="term" value="F:ATP binding"/>
    <property type="evidence" value="ECO:0007669"/>
    <property type="project" value="InterPro"/>
</dbReference>
<dbReference type="GO" id="GO:0000400">
    <property type="term" value="F:four-way junction DNA binding"/>
    <property type="evidence" value="ECO:0007669"/>
    <property type="project" value="UniProtKB-UniRule"/>
</dbReference>
<dbReference type="GO" id="GO:0009378">
    <property type="term" value="F:four-way junction helicase activity"/>
    <property type="evidence" value="ECO:0007669"/>
    <property type="project" value="InterPro"/>
</dbReference>
<dbReference type="GO" id="GO:0006310">
    <property type="term" value="P:DNA recombination"/>
    <property type="evidence" value="ECO:0007669"/>
    <property type="project" value="UniProtKB-UniRule"/>
</dbReference>
<dbReference type="GO" id="GO:0006281">
    <property type="term" value="P:DNA repair"/>
    <property type="evidence" value="ECO:0007669"/>
    <property type="project" value="UniProtKB-UniRule"/>
</dbReference>
<dbReference type="CDD" id="cd14332">
    <property type="entry name" value="UBA_RuvA_C"/>
    <property type="match status" value="1"/>
</dbReference>
<dbReference type="Gene3D" id="1.10.150.20">
    <property type="entry name" value="5' to 3' exonuclease, C-terminal subdomain"/>
    <property type="match status" value="1"/>
</dbReference>
<dbReference type="Gene3D" id="1.10.8.10">
    <property type="entry name" value="DNA helicase RuvA subunit, C-terminal domain"/>
    <property type="match status" value="1"/>
</dbReference>
<dbReference type="Gene3D" id="2.40.50.140">
    <property type="entry name" value="Nucleic acid-binding proteins"/>
    <property type="match status" value="1"/>
</dbReference>
<dbReference type="HAMAP" id="MF_00031">
    <property type="entry name" value="DNA_HJ_migration_RuvA"/>
    <property type="match status" value="1"/>
</dbReference>
<dbReference type="InterPro" id="IPR013849">
    <property type="entry name" value="DNA_helicase_Holl-junc_RuvA_I"/>
</dbReference>
<dbReference type="InterPro" id="IPR003583">
    <property type="entry name" value="Hlx-hairpin-Hlx_DNA-bd_motif"/>
</dbReference>
<dbReference type="InterPro" id="IPR012340">
    <property type="entry name" value="NA-bd_OB-fold"/>
</dbReference>
<dbReference type="InterPro" id="IPR000085">
    <property type="entry name" value="RuvA"/>
</dbReference>
<dbReference type="InterPro" id="IPR010994">
    <property type="entry name" value="RuvA_2-like"/>
</dbReference>
<dbReference type="InterPro" id="IPR011114">
    <property type="entry name" value="RuvA_C"/>
</dbReference>
<dbReference type="InterPro" id="IPR036267">
    <property type="entry name" value="RuvA_C_sf"/>
</dbReference>
<dbReference type="NCBIfam" id="TIGR00084">
    <property type="entry name" value="ruvA"/>
    <property type="match status" value="1"/>
</dbReference>
<dbReference type="Pfam" id="PF14520">
    <property type="entry name" value="HHH_5"/>
    <property type="match status" value="1"/>
</dbReference>
<dbReference type="Pfam" id="PF07499">
    <property type="entry name" value="RuvA_C"/>
    <property type="match status" value="1"/>
</dbReference>
<dbReference type="Pfam" id="PF01330">
    <property type="entry name" value="RuvA_N"/>
    <property type="match status" value="1"/>
</dbReference>
<dbReference type="SMART" id="SM00278">
    <property type="entry name" value="HhH1"/>
    <property type="match status" value="2"/>
</dbReference>
<dbReference type="SUPFAM" id="SSF46929">
    <property type="entry name" value="DNA helicase RuvA subunit, C-terminal domain"/>
    <property type="match status" value="1"/>
</dbReference>
<dbReference type="SUPFAM" id="SSF50249">
    <property type="entry name" value="Nucleic acid-binding proteins"/>
    <property type="match status" value="1"/>
</dbReference>
<dbReference type="SUPFAM" id="SSF47781">
    <property type="entry name" value="RuvA domain 2-like"/>
    <property type="match status" value="1"/>
</dbReference>
<sequence length="200" mass="22262">MYAYVKGKLTHLYPTHVVVETAGVGYEIQTPNSYRFQKHLDHEVLIHTSLIVREDAQLLYGFSSEEEKDMFLSLIKVTGIGPKSALAILATSTPNEVKRAIENENDTYLTKFPGIGKKTARQIVLDLKGKVKITEEDSDSLLQVDATSTVQDQFVQEAMLALEALGYSKRELAKVEKTLNKNKYDSVDEAVKAGLQLVVS</sequence>
<reference key="1">
    <citation type="journal article" date="2007" name="PLoS ONE">
        <title>Molecular correlates of host specialization in Staphylococcus aureus.</title>
        <authorList>
            <person name="Herron-Olson L."/>
            <person name="Fitzgerald J.R."/>
            <person name="Musser J.M."/>
            <person name="Kapur V."/>
        </authorList>
    </citation>
    <scope>NUCLEOTIDE SEQUENCE [LARGE SCALE GENOMIC DNA]</scope>
    <source>
        <strain>bovine RF122 / ET3-1</strain>
    </source>
</reference>
<protein>
    <recommendedName>
        <fullName evidence="1">Holliday junction branch migration complex subunit RuvA</fullName>
    </recommendedName>
</protein>